<accession>B3Q9J8</accession>
<gene>
    <name type="ordered locus">Rpal_1947</name>
</gene>
<organism>
    <name type="scientific">Rhodopseudomonas palustris (strain TIE-1)</name>
    <dbReference type="NCBI Taxonomy" id="395960"/>
    <lineage>
        <taxon>Bacteria</taxon>
        <taxon>Pseudomonadati</taxon>
        <taxon>Pseudomonadota</taxon>
        <taxon>Alphaproteobacteria</taxon>
        <taxon>Hyphomicrobiales</taxon>
        <taxon>Nitrobacteraceae</taxon>
        <taxon>Rhodopseudomonas</taxon>
    </lineage>
</organism>
<keyword id="KW-0456">Lyase</keyword>
<reference key="1">
    <citation type="submission" date="2008-05" db="EMBL/GenBank/DDBJ databases">
        <title>Complete sequence of Rhodopseudomonas palustris TIE-1.</title>
        <authorList>
            <consortium name="US DOE Joint Genome Institute"/>
            <person name="Lucas S."/>
            <person name="Copeland A."/>
            <person name="Lapidus A."/>
            <person name="Glavina del Rio T."/>
            <person name="Dalin E."/>
            <person name="Tice H."/>
            <person name="Pitluck S."/>
            <person name="Chain P."/>
            <person name="Malfatti S."/>
            <person name="Shin M."/>
            <person name="Vergez L."/>
            <person name="Lang D."/>
            <person name="Schmutz J."/>
            <person name="Larimer F."/>
            <person name="Land M."/>
            <person name="Hauser L."/>
            <person name="Kyrpides N."/>
            <person name="Mikhailova N."/>
            <person name="Emerson D."/>
            <person name="Newman D.K."/>
            <person name="Roden E."/>
            <person name="Richardson P."/>
        </authorList>
    </citation>
    <scope>NUCLEOTIDE SEQUENCE [LARGE SCALE GENOMIC DNA]</scope>
    <source>
        <strain>TIE-1</strain>
    </source>
</reference>
<protein>
    <recommendedName>
        <fullName evidence="1">Putative hydro-lyase Rpal_1947</fullName>
        <ecNumber evidence="1">4.2.1.-</ecNumber>
    </recommendedName>
</protein>
<comment type="similarity">
    <text evidence="1">Belongs to the D-glutamate cyclase family.</text>
</comment>
<proteinExistence type="inferred from homology"/>
<sequence length="272" mass="29538">MTVFAAEQQFHDAERPLPSHQARLACRAGLAETTAGVAPGFVQGNLAILPEKYAAAFHRFCQLNPKPCPIVGMSDVGNPMIPSLGIDLDIRTDLPRYRVWRDGELVEEPTDIVAHWRDDLVAFVIGCSFSFEEALLADDIPIRHIEEKVRVPMYRTNIPCEPAGPFSGPMVVSMRPLKPKDAIRAIQVTSRFPSVHGAPVHIGLPQSIGIADIAKPDYGDPVPIGPDELPVFWACGVTPQAVIAAAKVPFAITHAPGLMLVTDLKNKHLAVL</sequence>
<feature type="chain" id="PRO_0000379860" description="Putative hydro-lyase Rpal_1947">
    <location>
        <begin position="1"/>
        <end position="272"/>
    </location>
</feature>
<evidence type="ECO:0000255" key="1">
    <source>
        <dbReference type="HAMAP-Rule" id="MF_01830"/>
    </source>
</evidence>
<name>Y1947_RHOPT</name>
<dbReference type="EC" id="4.2.1.-" evidence="1"/>
<dbReference type="EMBL" id="CP001096">
    <property type="protein sequence ID" value="ACF00470.1"/>
    <property type="molecule type" value="Genomic_DNA"/>
</dbReference>
<dbReference type="RefSeq" id="WP_012495304.1">
    <property type="nucleotide sequence ID" value="NC_011004.1"/>
</dbReference>
<dbReference type="SMR" id="B3Q9J8"/>
<dbReference type="KEGG" id="rpt:Rpal_1947"/>
<dbReference type="HOGENOM" id="CLU_059759_0_0_5"/>
<dbReference type="OrthoDB" id="149585at2"/>
<dbReference type="Proteomes" id="UP000001725">
    <property type="component" value="Chromosome"/>
</dbReference>
<dbReference type="GO" id="GO:0016829">
    <property type="term" value="F:lyase activity"/>
    <property type="evidence" value="ECO:0007669"/>
    <property type="project" value="UniProtKB-KW"/>
</dbReference>
<dbReference type="FunFam" id="3.30.2040.10:FF:000001">
    <property type="entry name" value="D-glutamate cyclase, mitochondrial"/>
    <property type="match status" value="1"/>
</dbReference>
<dbReference type="Gene3D" id="3.40.1640.10">
    <property type="entry name" value="PSTPO5379-like"/>
    <property type="match status" value="1"/>
</dbReference>
<dbReference type="Gene3D" id="3.30.2040.10">
    <property type="entry name" value="PSTPO5379-like domain"/>
    <property type="match status" value="1"/>
</dbReference>
<dbReference type="HAMAP" id="MF_01830">
    <property type="entry name" value="Hydro_lyase"/>
    <property type="match status" value="1"/>
</dbReference>
<dbReference type="InterPro" id="IPR009906">
    <property type="entry name" value="D-Glu_cyclase"/>
</dbReference>
<dbReference type="InterPro" id="IPR038021">
    <property type="entry name" value="Putative_hydro-lyase"/>
</dbReference>
<dbReference type="InterPro" id="IPR016938">
    <property type="entry name" value="UPF0317"/>
</dbReference>
<dbReference type="NCBIfam" id="NF003969">
    <property type="entry name" value="PRK05463.1"/>
    <property type="match status" value="1"/>
</dbReference>
<dbReference type="PANTHER" id="PTHR32022">
    <property type="entry name" value="D-GLUTAMATE CYCLASE, MITOCHONDRIAL"/>
    <property type="match status" value="1"/>
</dbReference>
<dbReference type="PANTHER" id="PTHR32022:SF10">
    <property type="entry name" value="D-GLUTAMATE CYCLASE, MITOCHONDRIAL"/>
    <property type="match status" value="1"/>
</dbReference>
<dbReference type="Pfam" id="PF07286">
    <property type="entry name" value="D-Glu_cyclase"/>
    <property type="match status" value="1"/>
</dbReference>
<dbReference type="PIRSF" id="PIRSF029755">
    <property type="entry name" value="UCP029755"/>
    <property type="match status" value="1"/>
</dbReference>
<dbReference type="SUPFAM" id="SSF160920">
    <property type="entry name" value="PSTPO5379-like"/>
    <property type="match status" value="1"/>
</dbReference>